<organism>
    <name type="scientific">Mus musculus</name>
    <name type="common">Mouse</name>
    <dbReference type="NCBI Taxonomy" id="10090"/>
    <lineage>
        <taxon>Eukaryota</taxon>
        <taxon>Metazoa</taxon>
        <taxon>Chordata</taxon>
        <taxon>Craniata</taxon>
        <taxon>Vertebrata</taxon>
        <taxon>Euteleostomi</taxon>
        <taxon>Mammalia</taxon>
        <taxon>Eutheria</taxon>
        <taxon>Euarchontoglires</taxon>
        <taxon>Glires</taxon>
        <taxon>Rodentia</taxon>
        <taxon>Myomorpha</taxon>
        <taxon>Muroidea</taxon>
        <taxon>Muridae</taxon>
        <taxon>Murinae</taxon>
        <taxon>Mus</taxon>
        <taxon>Mus</taxon>
    </lineage>
</organism>
<evidence type="ECO:0000250" key="1">
    <source>
        <dbReference type="UniProtKB" id="Q57261"/>
    </source>
</evidence>
<evidence type="ECO:0000250" key="2">
    <source>
        <dbReference type="UniProtKB" id="Q9H0K6"/>
    </source>
</evidence>
<evidence type="ECO:0000255" key="3">
    <source>
        <dbReference type="PROSITE-ProRule" id="PRU00342"/>
    </source>
</evidence>
<evidence type="ECO:0000256" key="4">
    <source>
        <dbReference type="SAM" id="MobiDB-lite"/>
    </source>
</evidence>
<evidence type="ECO:0000305" key="5"/>
<evidence type="ECO:0000312" key="6">
    <source>
        <dbReference type="MGI" id="MGI:1926145"/>
    </source>
</evidence>
<feature type="chain" id="PRO_0000316786" description="Pseudouridylate synthase PUS7L">
    <location>
        <begin position="1"/>
        <end position="702"/>
    </location>
</feature>
<feature type="domain" description="TRUD" evidence="3">
    <location>
        <begin position="424"/>
        <end position="646"/>
    </location>
</feature>
<feature type="region of interest" description="Disordered" evidence="4">
    <location>
        <begin position="84"/>
        <end position="116"/>
    </location>
</feature>
<feature type="compositionally biased region" description="Basic and acidic residues" evidence="4">
    <location>
        <begin position="96"/>
        <end position="109"/>
    </location>
</feature>
<feature type="active site" description="Nucleophile" evidence="1">
    <location>
        <position position="339"/>
    </location>
</feature>
<feature type="modified residue" description="Phosphoserine" evidence="2">
    <location>
        <position position="79"/>
    </location>
</feature>
<feature type="sequence conflict" description="In Ref. 2; AAH66798." evidence="5" ref="2">
    <original>S</original>
    <variation>P</variation>
    <location>
        <position position="151"/>
    </location>
</feature>
<feature type="sequence conflict" description="In Ref. 2; AAH66798." evidence="5" ref="2">
    <original>D</original>
    <variation>N</variation>
    <location>
        <position position="558"/>
    </location>
</feature>
<feature type="sequence conflict" description="In Ref. 2; AAH66798." evidence="5" ref="2">
    <original>E</original>
    <variation>G</variation>
    <location>
        <position position="667"/>
    </location>
</feature>
<name>PUS7L_MOUSE</name>
<keyword id="KW-0413">Isomerase</keyword>
<keyword id="KW-0507">mRNA processing</keyword>
<keyword id="KW-0597">Phosphoprotein</keyword>
<keyword id="KW-1185">Reference proteome</keyword>
<proteinExistence type="evidence at protein level"/>
<sequence>MAEDTDGGIRFNSLCFINDHVGFQGSIKTSPSDFIVIEIDEQGQLVSKATDGSLYEISKIQSEPSNSVKKPKLNIQNVSLEHKNSEGAADLPGCSDGDRSHQSDSEKENSVNSVTSKCEEESVDLLRSLLDEKTHTSLGQFACDIKRMWNSQTELTEPSPELSLGKILDKNRRAVLHSAVRQAFPFLITVGNQGEVVVKPNRECKELCRLVSEEEALGFFKYLDAKKENSKFTFKPDPNKDHRKAVHHFLNKKFGNLVETKSFPGQHHSAGNPDSAITVRFREKARGKRSHPEGCERGKAVYTAFTLQKENLETFEAIGLLAVKLGVIPSDFSYAGLKDKRAITYQSMVVKKVTPERLKSIKEEIEKKRMNVFNIRSVGDCLRLGQLKGNHFEIIIRHLRNQLNDSANLTERILEAIENVKNKGFVNYYGPQRFGKGQKIQTDQIGLALLKNEMVKAIKLFLTPEDVDDPVNKAKQYFLRTEDAKGTLSLMPEFRVRERALLESLHRFGVTEEGCVRAWFSFPHSMRIFYIHAYSSRIWNEAASYRLAAYGPKVVEGDLICSDEDADKHFPSSKVHLVTKEEESAHTYALHQVVLPVLGYNVQYPENQVGRWYQEALSRDGLQACRFRVPALKLNVPGCYRHIVKHPRNVSHRLVHPDPATEEARVEGPHSDDTASSLSLSFDLDASCYATVCLREMMKGDI</sequence>
<accession>Q8CE46</accession>
<accession>Q6NY03</accession>
<accession>Q8C9X5</accession>
<comment type="function">
    <text evidence="2">Pseudouridine synthase that catalyzes pseudouridylation of mRNAs.</text>
</comment>
<comment type="catalytic activity">
    <reaction evidence="2">
        <text>a uridine in mRNA = a pseudouridine in mRNA</text>
        <dbReference type="Rhea" id="RHEA:56644"/>
        <dbReference type="Rhea" id="RHEA-COMP:14658"/>
        <dbReference type="Rhea" id="RHEA-COMP:14659"/>
        <dbReference type="ChEBI" id="CHEBI:65314"/>
        <dbReference type="ChEBI" id="CHEBI:65315"/>
    </reaction>
</comment>
<comment type="similarity">
    <text evidence="5">Belongs to the pseudouridine synthase TruD family.</text>
</comment>
<comment type="sequence caution" evidence="5">
    <conflict type="miscellaneous discrepancy">
        <sequence resource="EMBL-CDS" id="BAC30554"/>
    </conflict>
    <text>Probable cloning artifact. May result from internal priming due to genomic poly-A tracts.</text>
</comment>
<reference key="1">
    <citation type="journal article" date="2005" name="Science">
        <title>The transcriptional landscape of the mammalian genome.</title>
        <authorList>
            <person name="Carninci P."/>
            <person name="Kasukawa T."/>
            <person name="Katayama S."/>
            <person name="Gough J."/>
            <person name="Frith M.C."/>
            <person name="Maeda N."/>
            <person name="Oyama R."/>
            <person name="Ravasi T."/>
            <person name="Lenhard B."/>
            <person name="Wells C."/>
            <person name="Kodzius R."/>
            <person name="Shimokawa K."/>
            <person name="Bajic V.B."/>
            <person name="Brenner S.E."/>
            <person name="Batalov S."/>
            <person name="Forrest A.R."/>
            <person name="Zavolan M."/>
            <person name="Davis M.J."/>
            <person name="Wilming L.G."/>
            <person name="Aidinis V."/>
            <person name="Allen J.E."/>
            <person name="Ambesi-Impiombato A."/>
            <person name="Apweiler R."/>
            <person name="Aturaliya R.N."/>
            <person name="Bailey T.L."/>
            <person name="Bansal M."/>
            <person name="Baxter L."/>
            <person name="Beisel K.W."/>
            <person name="Bersano T."/>
            <person name="Bono H."/>
            <person name="Chalk A.M."/>
            <person name="Chiu K.P."/>
            <person name="Choudhary V."/>
            <person name="Christoffels A."/>
            <person name="Clutterbuck D.R."/>
            <person name="Crowe M.L."/>
            <person name="Dalla E."/>
            <person name="Dalrymple B.P."/>
            <person name="de Bono B."/>
            <person name="Della Gatta G."/>
            <person name="di Bernardo D."/>
            <person name="Down T."/>
            <person name="Engstrom P."/>
            <person name="Fagiolini M."/>
            <person name="Faulkner G."/>
            <person name="Fletcher C.F."/>
            <person name="Fukushima T."/>
            <person name="Furuno M."/>
            <person name="Futaki S."/>
            <person name="Gariboldi M."/>
            <person name="Georgii-Hemming P."/>
            <person name="Gingeras T.R."/>
            <person name="Gojobori T."/>
            <person name="Green R.E."/>
            <person name="Gustincich S."/>
            <person name="Harbers M."/>
            <person name="Hayashi Y."/>
            <person name="Hensch T.K."/>
            <person name="Hirokawa N."/>
            <person name="Hill D."/>
            <person name="Huminiecki L."/>
            <person name="Iacono M."/>
            <person name="Ikeo K."/>
            <person name="Iwama A."/>
            <person name="Ishikawa T."/>
            <person name="Jakt M."/>
            <person name="Kanapin A."/>
            <person name="Katoh M."/>
            <person name="Kawasawa Y."/>
            <person name="Kelso J."/>
            <person name="Kitamura H."/>
            <person name="Kitano H."/>
            <person name="Kollias G."/>
            <person name="Krishnan S.P."/>
            <person name="Kruger A."/>
            <person name="Kummerfeld S.K."/>
            <person name="Kurochkin I.V."/>
            <person name="Lareau L.F."/>
            <person name="Lazarevic D."/>
            <person name="Lipovich L."/>
            <person name="Liu J."/>
            <person name="Liuni S."/>
            <person name="McWilliam S."/>
            <person name="Madan Babu M."/>
            <person name="Madera M."/>
            <person name="Marchionni L."/>
            <person name="Matsuda H."/>
            <person name="Matsuzawa S."/>
            <person name="Miki H."/>
            <person name="Mignone F."/>
            <person name="Miyake S."/>
            <person name="Morris K."/>
            <person name="Mottagui-Tabar S."/>
            <person name="Mulder N."/>
            <person name="Nakano N."/>
            <person name="Nakauchi H."/>
            <person name="Ng P."/>
            <person name="Nilsson R."/>
            <person name="Nishiguchi S."/>
            <person name="Nishikawa S."/>
            <person name="Nori F."/>
            <person name="Ohara O."/>
            <person name="Okazaki Y."/>
            <person name="Orlando V."/>
            <person name="Pang K.C."/>
            <person name="Pavan W.J."/>
            <person name="Pavesi G."/>
            <person name="Pesole G."/>
            <person name="Petrovsky N."/>
            <person name="Piazza S."/>
            <person name="Reed J."/>
            <person name="Reid J.F."/>
            <person name="Ring B.Z."/>
            <person name="Ringwald M."/>
            <person name="Rost B."/>
            <person name="Ruan Y."/>
            <person name="Salzberg S.L."/>
            <person name="Sandelin A."/>
            <person name="Schneider C."/>
            <person name="Schoenbach C."/>
            <person name="Sekiguchi K."/>
            <person name="Semple C.A."/>
            <person name="Seno S."/>
            <person name="Sessa L."/>
            <person name="Sheng Y."/>
            <person name="Shibata Y."/>
            <person name="Shimada H."/>
            <person name="Shimada K."/>
            <person name="Silva D."/>
            <person name="Sinclair B."/>
            <person name="Sperling S."/>
            <person name="Stupka E."/>
            <person name="Sugiura K."/>
            <person name="Sultana R."/>
            <person name="Takenaka Y."/>
            <person name="Taki K."/>
            <person name="Tammoja K."/>
            <person name="Tan S.L."/>
            <person name="Tang S."/>
            <person name="Taylor M.S."/>
            <person name="Tegner J."/>
            <person name="Teichmann S.A."/>
            <person name="Ueda H.R."/>
            <person name="van Nimwegen E."/>
            <person name="Verardo R."/>
            <person name="Wei C.L."/>
            <person name="Yagi K."/>
            <person name="Yamanishi H."/>
            <person name="Zabarovsky E."/>
            <person name="Zhu S."/>
            <person name="Zimmer A."/>
            <person name="Hide W."/>
            <person name="Bult C."/>
            <person name="Grimmond S.M."/>
            <person name="Teasdale R.D."/>
            <person name="Liu E.T."/>
            <person name="Brusic V."/>
            <person name="Quackenbush J."/>
            <person name="Wahlestedt C."/>
            <person name="Mattick J.S."/>
            <person name="Hume D.A."/>
            <person name="Kai C."/>
            <person name="Sasaki D."/>
            <person name="Tomaru Y."/>
            <person name="Fukuda S."/>
            <person name="Kanamori-Katayama M."/>
            <person name="Suzuki M."/>
            <person name="Aoki J."/>
            <person name="Arakawa T."/>
            <person name="Iida J."/>
            <person name="Imamura K."/>
            <person name="Itoh M."/>
            <person name="Kato T."/>
            <person name="Kawaji H."/>
            <person name="Kawagashira N."/>
            <person name="Kawashima T."/>
            <person name="Kojima M."/>
            <person name="Kondo S."/>
            <person name="Konno H."/>
            <person name="Nakano K."/>
            <person name="Ninomiya N."/>
            <person name="Nishio T."/>
            <person name="Okada M."/>
            <person name="Plessy C."/>
            <person name="Shibata K."/>
            <person name="Shiraki T."/>
            <person name="Suzuki S."/>
            <person name="Tagami M."/>
            <person name="Waki K."/>
            <person name="Watahiki A."/>
            <person name="Okamura-Oho Y."/>
            <person name="Suzuki H."/>
            <person name="Kawai J."/>
            <person name="Hayashizaki Y."/>
        </authorList>
    </citation>
    <scope>NUCLEOTIDE SEQUENCE [LARGE SCALE MRNA]</scope>
    <source>
        <strain>C57BL/6J</strain>
        <tissue>Skin</tissue>
        <tissue>Thymus</tissue>
    </source>
</reference>
<reference key="2">
    <citation type="journal article" date="2004" name="Genome Res.">
        <title>The status, quality, and expansion of the NIH full-length cDNA project: the Mammalian Gene Collection (MGC).</title>
        <authorList>
            <consortium name="The MGC Project Team"/>
        </authorList>
    </citation>
    <scope>NUCLEOTIDE SEQUENCE [LARGE SCALE MRNA]</scope>
    <source>
        <strain>C57BL/6J</strain>
        <tissue>Kidney</tissue>
    </source>
</reference>
<reference key="3">
    <citation type="journal article" date="2010" name="Cell">
        <title>A tissue-specific atlas of mouse protein phosphorylation and expression.</title>
        <authorList>
            <person name="Huttlin E.L."/>
            <person name="Jedrychowski M.P."/>
            <person name="Elias J.E."/>
            <person name="Goswami T."/>
            <person name="Rad R."/>
            <person name="Beausoleil S.A."/>
            <person name="Villen J."/>
            <person name="Haas W."/>
            <person name="Sowa M.E."/>
            <person name="Gygi S.P."/>
        </authorList>
    </citation>
    <scope>IDENTIFICATION BY MASS SPECTROMETRY [LARGE SCALE ANALYSIS]</scope>
    <source>
        <tissue>Spleen</tissue>
    </source>
</reference>
<dbReference type="EC" id="5.4.99.-" evidence="2"/>
<dbReference type="EMBL" id="AK029027">
    <property type="protein sequence ID" value="BAC26251.1"/>
    <property type="molecule type" value="mRNA"/>
</dbReference>
<dbReference type="EMBL" id="AK040257">
    <property type="protein sequence ID" value="BAC30554.1"/>
    <property type="status" value="ALT_SEQ"/>
    <property type="molecule type" value="mRNA"/>
</dbReference>
<dbReference type="EMBL" id="BC066798">
    <property type="protein sequence ID" value="AAH66798.1"/>
    <property type="molecule type" value="mRNA"/>
</dbReference>
<dbReference type="CCDS" id="CCDS27771.1"/>
<dbReference type="RefSeq" id="NP_766025.1">
    <property type="nucleotide sequence ID" value="NM_172437.3"/>
</dbReference>
<dbReference type="SMR" id="Q8CE46"/>
<dbReference type="BioGRID" id="219690">
    <property type="interactions" value="2"/>
</dbReference>
<dbReference type="FunCoup" id="Q8CE46">
    <property type="interactions" value="2214"/>
</dbReference>
<dbReference type="STRING" id="10090.ENSMUSP00000044075"/>
<dbReference type="iPTMnet" id="Q8CE46"/>
<dbReference type="PhosphoSitePlus" id="Q8CE46"/>
<dbReference type="PaxDb" id="10090-ENSMUSP00000044075"/>
<dbReference type="PeptideAtlas" id="Q8CE46"/>
<dbReference type="ProteomicsDB" id="301899"/>
<dbReference type="Pumba" id="Q8CE46"/>
<dbReference type="Antibodypedia" id="25131">
    <property type="antibodies" value="46 antibodies from 16 providers"/>
</dbReference>
<dbReference type="DNASU" id="78895"/>
<dbReference type="Ensembl" id="ENSMUST00000049151.4">
    <property type="protein sequence ID" value="ENSMUSP00000044075.4"/>
    <property type="gene ID" value="ENSMUSG00000033356.4"/>
</dbReference>
<dbReference type="GeneID" id="78895"/>
<dbReference type="KEGG" id="mmu:78895"/>
<dbReference type="UCSC" id="uc007xjh.2">
    <property type="organism name" value="mouse"/>
</dbReference>
<dbReference type="AGR" id="MGI:1926145"/>
<dbReference type="CTD" id="83448"/>
<dbReference type="MGI" id="MGI:1926145">
    <property type="gene designation" value="Pus7l"/>
</dbReference>
<dbReference type="VEuPathDB" id="HostDB:ENSMUSG00000033356"/>
<dbReference type="eggNOG" id="KOG2339">
    <property type="taxonomic scope" value="Eukaryota"/>
</dbReference>
<dbReference type="GeneTree" id="ENSGT00530000063554"/>
<dbReference type="HOGENOM" id="CLU_005281_1_1_1"/>
<dbReference type="InParanoid" id="Q8CE46"/>
<dbReference type="OMA" id="FPNNKVH"/>
<dbReference type="OrthoDB" id="447290at2759"/>
<dbReference type="PhylomeDB" id="Q8CE46"/>
<dbReference type="TreeFam" id="TF314278"/>
<dbReference type="BioGRID-ORCS" id="78895">
    <property type="hits" value="2 hits in 79 CRISPR screens"/>
</dbReference>
<dbReference type="PRO" id="PR:Q8CE46"/>
<dbReference type="Proteomes" id="UP000000589">
    <property type="component" value="Chromosome 15"/>
</dbReference>
<dbReference type="RNAct" id="Q8CE46">
    <property type="molecule type" value="protein"/>
</dbReference>
<dbReference type="Bgee" id="ENSMUSG00000033356">
    <property type="expression patterns" value="Expressed in ear vesicle and 168 other cell types or tissues"/>
</dbReference>
<dbReference type="ExpressionAtlas" id="Q8CE46">
    <property type="expression patterns" value="baseline and differential"/>
</dbReference>
<dbReference type="GO" id="GO:0009982">
    <property type="term" value="F:pseudouridine synthase activity"/>
    <property type="evidence" value="ECO:0000250"/>
    <property type="project" value="UniProtKB"/>
</dbReference>
<dbReference type="GO" id="GO:0003723">
    <property type="term" value="F:RNA binding"/>
    <property type="evidence" value="ECO:0007669"/>
    <property type="project" value="InterPro"/>
</dbReference>
<dbReference type="GO" id="GO:0006397">
    <property type="term" value="P:mRNA processing"/>
    <property type="evidence" value="ECO:0007669"/>
    <property type="project" value="UniProtKB-KW"/>
</dbReference>
<dbReference type="GO" id="GO:1990481">
    <property type="term" value="P:mRNA pseudouridine synthesis"/>
    <property type="evidence" value="ECO:0000250"/>
    <property type="project" value="UniProtKB"/>
</dbReference>
<dbReference type="CDD" id="cd02576">
    <property type="entry name" value="PseudoU_synth_ScPUS7"/>
    <property type="match status" value="1"/>
</dbReference>
<dbReference type="FunFam" id="3.30.2350.20:FF:000004">
    <property type="entry name" value="pseudouridylate synthase 7 homolog-like protein"/>
    <property type="match status" value="1"/>
</dbReference>
<dbReference type="FunFam" id="3.30.2350.20:FF:000005">
    <property type="entry name" value="pseudouridylate synthase 7 homolog-like protein"/>
    <property type="match status" value="1"/>
</dbReference>
<dbReference type="Gene3D" id="3.30.2350.20">
    <property type="entry name" value="TruD, catalytic domain"/>
    <property type="match status" value="2"/>
</dbReference>
<dbReference type="InterPro" id="IPR020103">
    <property type="entry name" value="PsdUridine_synth_cat_dom_sf"/>
</dbReference>
<dbReference type="InterPro" id="IPR001656">
    <property type="entry name" value="PsdUridine_synth_TruD"/>
</dbReference>
<dbReference type="InterPro" id="IPR011760">
    <property type="entry name" value="PsdUridine_synth_TruD_insert"/>
</dbReference>
<dbReference type="InterPro" id="IPR056963">
    <property type="entry name" value="PUS7L_N"/>
</dbReference>
<dbReference type="InterPro" id="IPR056961">
    <property type="entry name" value="R3H_PUS7L"/>
</dbReference>
<dbReference type="InterPro" id="IPR042214">
    <property type="entry name" value="TruD_catalytic"/>
</dbReference>
<dbReference type="NCBIfam" id="TIGR00094">
    <property type="entry name" value="tRNA_TruD_broad"/>
    <property type="match status" value="1"/>
</dbReference>
<dbReference type="PANTHER" id="PTHR13326:SF21">
    <property type="entry name" value="PSEUDOURIDYLATE SYNTHASE PUS7L"/>
    <property type="match status" value="1"/>
</dbReference>
<dbReference type="PANTHER" id="PTHR13326">
    <property type="entry name" value="TRNA PSEUDOURIDINE SYNTHASE D"/>
    <property type="match status" value="1"/>
</dbReference>
<dbReference type="Pfam" id="PF23943">
    <property type="entry name" value="PUS7L_N"/>
    <property type="match status" value="1"/>
</dbReference>
<dbReference type="Pfam" id="PF25094">
    <property type="entry name" value="R3H_PUS7L"/>
    <property type="match status" value="1"/>
</dbReference>
<dbReference type="Pfam" id="PF01142">
    <property type="entry name" value="TruD"/>
    <property type="match status" value="1"/>
</dbReference>
<dbReference type="PIRSF" id="PIRSF037016">
    <property type="entry name" value="Pseudouridin_synth_euk_prd"/>
    <property type="match status" value="1"/>
</dbReference>
<dbReference type="SUPFAM" id="SSF55120">
    <property type="entry name" value="Pseudouridine synthase"/>
    <property type="match status" value="1"/>
</dbReference>
<dbReference type="PROSITE" id="PS50984">
    <property type="entry name" value="TRUD"/>
    <property type="match status" value="1"/>
</dbReference>
<gene>
    <name evidence="6" type="primary">Pus7l</name>
</gene>
<protein>
    <recommendedName>
        <fullName evidence="5">Pseudouridylate synthase PUS7L</fullName>
        <ecNumber evidence="2">5.4.99.-</ecNumber>
    </recommendedName>
    <alternativeName>
        <fullName evidence="5">Pseudouridylate synthase 7 homolog-like protein</fullName>
    </alternativeName>
</protein>